<gene>
    <name type="primary">ING4</name>
    <name type="ORF">RCJMB04_8l5</name>
</gene>
<keyword id="KW-0131">Cell cycle</keyword>
<keyword id="KW-0156">Chromatin regulator</keyword>
<keyword id="KW-0175">Coiled coil</keyword>
<keyword id="KW-0479">Metal-binding</keyword>
<keyword id="KW-0539">Nucleus</keyword>
<keyword id="KW-1185">Reference proteome</keyword>
<keyword id="KW-0043">Tumor suppressor</keyword>
<keyword id="KW-0862">Zinc</keyword>
<keyword id="KW-0863">Zinc-finger</keyword>
<organism>
    <name type="scientific">Gallus gallus</name>
    <name type="common">Chicken</name>
    <dbReference type="NCBI Taxonomy" id="9031"/>
    <lineage>
        <taxon>Eukaryota</taxon>
        <taxon>Metazoa</taxon>
        <taxon>Chordata</taxon>
        <taxon>Craniata</taxon>
        <taxon>Vertebrata</taxon>
        <taxon>Euteleostomi</taxon>
        <taxon>Archelosauria</taxon>
        <taxon>Archosauria</taxon>
        <taxon>Dinosauria</taxon>
        <taxon>Saurischia</taxon>
        <taxon>Theropoda</taxon>
        <taxon>Coelurosauria</taxon>
        <taxon>Aves</taxon>
        <taxon>Neognathae</taxon>
        <taxon>Galloanserae</taxon>
        <taxon>Galliformes</taxon>
        <taxon>Phasianidae</taxon>
        <taxon>Phasianinae</taxon>
        <taxon>Gallus</taxon>
    </lineage>
</organism>
<reference key="1">
    <citation type="journal article" date="2005" name="Genome Biol.">
        <title>Full-length cDNAs from chicken bursal lymphocytes to facilitate gene function analysis.</title>
        <authorList>
            <person name="Caldwell R.B."/>
            <person name="Kierzek A.M."/>
            <person name="Arakawa H."/>
            <person name="Bezzubov Y."/>
            <person name="Zaim J."/>
            <person name="Fiedler P."/>
            <person name="Kutter S."/>
            <person name="Blagodatski A."/>
            <person name="Kostovska D."/>
            <person name="Koter M."/>
            <person name="Plachy J."/>
            <person name="Carninci P."/>
            <person name="Hayashizaki Y."/>
            <person name="Buerstedde J.-M."/>
        </authorList>
    </citation>
    <scope>NUCLEOTIDE SEQUENCE [LARGE SCALE MRNA]</scope>
    <source>
        <strain>CB</strain>
        <tissue>Bursa of Fabricius</tissue>
    </source>
</reference>
<proteinExistence type="evidence at transcript level"/>
<comment type="function">
    <text evidence="3">Component of HBO1 complexes, which specifically mediate acetylation of histone H3 at 'Lys-14' (H3K14ac), and have reduced activity toward histone H4. Through chromatin acetylation it may function in DNA replication.</text>
</comment>
<comment type="subunit">
    <text evidence="3">Homodimer. Component of the HBO1 complex.</text>
</comment>
<comment type="subcellular location">
    <subcellularLocation>
        <location evidence="3">Nucleus</location>
    </subcellularLocation>
</comment>
<comment type="domain">
    <text evidence="1 3">The PHD-type zinc finger mediates the binding to H3K4me3.</text>
</comment>
<comment type="similarity">
    <text evidence="7">Belongs to the ING family.</text>
</comment>
<accession>Q5ZKY4</accession>
<dbReference type="EMBL" id="AJ719950">
    <property type="protein sequence ID" value="CAG31609.1"/>
    <property type="molecule type" value="mRNA"/>
</dbReference>
<dbReference type="RefSeq" id="NP_001006251.1">
    <property type="nucleotide sequence ID" value="NM_001006251.2"/>
</dbReference>
<dbReference type="BMRB" id="Q5ZKY4"/>
<dbReference type="SMR" id="Q5ZKY4"/>
<dbReference type="FunCoup" id="Q5ZKY4">
    <property type="interactions" value="1104"/>
</dbReference>
<dbReference type="STRING" id="9031.ENSGALP00000023298"/>
<dbReference type="PaxDb" id="9031-ENSGALP00000023298"/>
<dbReference type="GeneID" id="418281"/>
<dbReference type="KEGG" id="gga:418281"/>
<dbReference type="CTD" id="51147"/>
<dbReference type="VEuPathDB" id="HostDB:geneid_418281"/>
<dbReference type="eggNOG" id="KOG1973">
    <property type="taxonomic scope" value="Eukaryota"/>
</dbReference>
<dbReference type="HOGENOM" id="CLU_031900_5_1_1"/>
<dbReference type="InParanoid" id="Q5ZKY4"/>
<dbReference type="OrthoDB" id="5411773at2759"/>
<dbReference type="PhylomeDB" id="Q5ZKY4"/>
<dbReference type="TreeFam" id="TF352014"/>
<dbReference type="PRO" id="PR:Q5ZKY4"/>
<dbReference type="Proteomes" id="UP000000539">
    <property type="component" value="Chromosome 1"/>
</dbReference>
<dbReference type="Bgee" id="ENSGALG00000014457">
    <property type="expression patterns" value="Expressed in ovary and 13 other cell types or tissues"/>
</dbReference>
<dbReference type="GO" id="GO:0005634">
    <property type="term" value="C:nucleus"/>
    <property type="evidence" value="ECO:0000318"/>
    <property type="project" value="GO_Central"/>
</dbReference>
<dbReference type="GO" id="GO:0035064">
    <property type="term" value="F:methylated histone binding"/>
    <property type="evidence" value="ECO:0000318"/>
    <property type="project" value="GO_Central"/>
</dbReference>
<dbReference type="GO" id="GO:0008270">
    <property type="term" value="F:zinc ion binding"/>
    <property type="evidence" value="ECO:0007669"/>
    <property type="project" value="UniProtKB-KW"/>
</dbReference>
<dbReference type="GO" id="GO:0140889">
    <property type="term" value="P:DNA replication-dependent chromatin disassembly"/>
    <property type="evidence" value="ECO:0000250"/>
    <property type="project" value="UniProtKB"/>
</dbReference>
<dbReference type="GO" id="GO:0043065">
    <property type="term" value="P:positive regulation of apoptotic process"/>
    <property type="evidence" value="ECO:0000318"/>
    <property type="project" value="GO_Central"/>
</dbReference>
<dbReference type="GO" id="GO:0006355">
    <property type="term" value="P:regulation of DNA-templated transcription"/>
    <property type="evidence" value="ECO:0000318"/>
    <property type="project" value="GO_Central"/>
</dbReference>
<dbReference type="CDD" id="cd16862">
    <property type="entry name" value="ING_ING4"/>
    <property type="match status" value="1"/>
</dbReference>
<dbReference type="CDD" id="cd15684">
    <property type="entry name" value="PHD_ING4"/>
    <property type="match status" value="1"/>
</dbReference>
<dbReference type="FunFam" id="3.30.40.10:FF:000016">
    <property type="entry name" value="Inhibitor of growth protein"/>
    <property type="match status" value="1"/>
</dbReference>
<dbReference type="Gene3D" id="6.10.140.1740">
    <property type="match status" value="1"/>
</dbReference>
<dbReference type="Gene3D" id="3.30.40.10">
    <property type="entry name" value="Zinc/RING finger domain, C3HC4 (zinc finger)"/>
    <property type="match status" value="1"/>
</dbReference>
<dbReference type="InterPro" id="IPR028651">
    <property type="entry name" value="ING_fam"/>
</dbReference>
<dbReference type="InterPro" id="IPR024610">
    <property type="entry name" value="ING_N_histone-binding"/>
</dbReference>
<dbReference type="InterPro" id="IPR019786">
    <property type="entry name" value="Zinc_finger_PHD-type_CS"/>
</dbReference>
<dbReference type="InterPro" id="IPR011011">
    <property type="entry name" value="Znf_FYVE_PHD"/>
</dbReference>
<dbReference type="InterPro" id="IPR001965">
    <property type="entry name" value="Znf_PHD"/>
</dbReference>
<dbReference type="InterPro" id="IPR019787">
    <property type="entry name" value="Znf_PHD-finger"/>
</dbReference>
<dbReference type="InterPro" id="IPR013083">
    <property type="entry name" value="Znf_RING/FYVE/PHD"/>
</dbReference>
<dbReference type="PANTHER" id="PTHR10333">
    <property type="entry name" value="INHIBITOR OF GROWTH PROTEIN"/>
    <property type="match status" value="1"/>
</dbReference>
<dbReference type="PANTHER" id="PTHR10333:SF106">
    <property type="entry name" value="INHIBITOR OF GROWTH PROTEIN 4"/>
    <property type="match status" value="1"/>
</dbReference>
<dbReference type="Pfam" id="PF12998">
    <property type="entry name" value="ING"/>
    <property type="match status" value="1"/>
</dbReference>
<dbReference type="SMART" id="SM01408">
    <property type="entry name" value="ING"/>
    <property type="match status" value="1"/>
</dbReference>
<dbReference type="SMART" id="SM00249">
    <property type="entry name" value="PHD"/>
    <property type="match status" value="1"/>
</dbReference>
<dbReference type="SUPFAM" id="SSF57903">
    <property type="entry name" value="FYVE/PHD zinc finger"/>
    <property type="match status" value="1"/>
</dbReference>
<dbReference type="PROSITE" id="PS01359">
    <property type="entry name" value="ZF_PHD_1"/>
    <property type="match status" value="1"/>
</dbReference>
<dbReference type="PROSITE" id="PS50016">
    <property type="entry name" value="ZF_PHD_2"/>
    <property type="match status" value="1"/>
</dbReference>
<sequence>MAAGMYLEHYLDSIENLPFELQRNFQLMRDLDQRTEDLKSEIDKLATEYISNARTLSSEEKLGLLKQIQEAYGKCKEFGDDKVQLAMQTYEMVDKHIRRLDTDLARFEADLKEKQIESSDYDSSSSKGKKKGRAQKEKKAARARSKGKNSDEEAPKTAQKKLKLVRTSTEYGMPSVTFGNVHPSDVLDMPVDPNEPTYCLCHQVSYGEMIGCDNPDCSIEWFHFACVGLTTKPRGKWFCPRCSQERKKK</sequence>
<protein>
    <recommendedName>
        <fullName>Inhibitor of growth protein 4</fullName>
    </recommendedName>
    <alternativeName>
        <fullName>p29ING4</fullName>
    </alternativeName>
</protein>
<name>ING4_CHICK</name>
<feature type="chain" id="PRO_0000212670" description="Inhibitor of growth protein 4">
    <location>
        <begin position="1"/>
        <end position="249"/>
    </location>
</feature>
<feature type="zinc finger region" description="PHD-type" evidence="5">
    <location>
        <begin position="196"/>
        <end position="245"/>
    </location>
</feature>
<feature type="region of interest" description="Disordered" evidence="6">
    <location>
        <begin position="115"/>
        <end position="160"/>
    </location>
</feature>
<feature type="coiled-coil region" evidence="4">
    <location>
        <begin position="25"/>
        <end position="118"/>
    </location>
</feature>
<feature type="binding site" evidence="2">
    <location>
        <position position="199"/>
    </location>
    <ligand>
        <name>Zn(2+)</name>
        <dbReference type="ChEBI" id="CHEBI:29105"/>
        <label>1</label>
    </ligand>
</feature>
<feature type="binding site" evidence="2">
    <location>
        <position position="201"/>
    </location>
    <ligand>
        <name>Zn(2+)</name>
        <dbReference type="ChEBI" id="CHEBI:29105"/>
        <label>1</label>
    </ligand>
</feature>
<feature type="binding site" evidence="2">
    <location>
        <position position="212"/>
    </location>
    <ligand>
        <name>Zn(2+)</name>
        <dbReference type="ChEBI" id="CHEBI:29105"/>
        <label>2</label>
    </ligand>
</feature>
<feature type="binding site" evidence="2">
    <location>
        <position position="217"/>
    </location>
    <ligand>
        <name>Zn(2+)</name>
        <dbReference type="ChEBI" id="CHEBI:29105"/>
        <label>2</label>
    </ligand>
</feature>
<feature type="binding site" evidence="2">
    <location>
        <position position="223"/>
    </location>
    <ligand>
        <name>Zn(2+)</name>
        <dbReference type="ChEBI" id="CHEBI:29105"/>
        <label>1</label>
    </ligand>
</feature>
<feature type="binding site" evidence="2">
    <location>
        <position position="226"/>
    </location>
    <ligand>
        <name>Zn(2+)</name>
        <dbReference type="ChEBI" id="CHEBI:29105"/>
        <label>1</label>
    </ligand>
</feature>
<feature type="binding site" evidence="2">
    <location>
        <position position="239"/>
    </location>
    <ligand>
        <name>Zn(2+)</name>
        <dbReference type="ChEBI" id="CHEBI:29105"/>
        <label>2</label>
    </ligand>
</feature>
<feature type="binding site" evidence="2">
    <location>
        <position position="242"/>
    </location>
    <ligand>
        <name>Zn(2+)</name>
        <dbReference type="ChEBI" id="CHEBI:29105"/>
        <label>2</label>
    </ligand>
</feature>
<feature type="site" description="Histone H3K4me3 binding" evidence="2">
    <location>
        <position position="198"/>
    </location>
</feature>
<feature type="site" description="Histone H3K4me3 binding" evidence="2">
    <location>
        <position position="209"/>
    </location>
</feature>
<feature type="site" description="Histone H3K4me3 binding" evidence="2">
    <location>
        <position position="213"/>
    </location>
</feature>
<feature type="site" description="Histone H3K4me3 binding" evidence="2">
    <location>
        <position position="221"/>
    </location>
</feature>
<evidence type="ECO:0000250" key="1"/>
<evidence type="ECO:0000250" key="2">
    <source>
        <dbReference type="UniProtKB" id="Q9UK53"/>
    </source>
</evidence>
<evidence type="ECO:0000250" key="3">
    <source>
        <dbReference type="UniProtKB" id="Q9UNL4"/>
    </source>
</evidence>
<evidence type="ECO:0000255" key="4"/>
<evidence type="ECO:0000255" key="5">
    <source>
        <dbReference type="PROSITE-ProRule" id="PRU00146"/>
    </source>
</evidence>
<evidence type="ECO:0000256" key="6">
    <source>
        <dbReference type="SAM" id="MobiDB-lite"/>
    </source>
</evidence>
<evidence type="ECO:0000305" key="7"/>